<proteinExistence type="inferred from homology"/>
<organism>
    <name type="scientific">Escherichia coli O6:K15:H31 (strain 536 / UPEC)</name>
    <dbReference type="NCBI Taxonomy" id="362663"/>
    <lineage>
        <taxon>Bacteria</taxon>
        <taxon>Pseudomonadati</taxon>
        <taxon>Pseudomonadota</taxon>
        <taxon>Gammaproteobacteria</taxon>
        <taxon>Enterobacterales</taxon>
        <taxon>Enterobacteriaceae</taxon>
        <taxon>Escherichia</taxon>
    </lineage>
</organism>
<reference key="1">
    <citation type="journal article" date="2006" name="Mol. Microbiol.">
        <title>Role of pathogenicity island-associated integrases in the genome plasticity of uropathogenic Escherichia coli strain 536.</title>
        <authorList>
            <person name="Hochhut B."/>
            <person name="Wilde C."/>
            <person name="Balling G."/>
            <person name="Middendorf B."/>
            <person name="Dobrindt U."/>
            <person name="Brzuszkiewicz E."/>
            <person name="Gottschalk G."/>
            <person name="Carniel E."/>
            <person name="Hacker J."/>
        </authorList>
    </citation>
    <scope>NUCLEOTIDE SEQUENCE [LARGE SCALE GENOMIC DNA]</scope>
    <source>
        <strain>536 / UPEC</strain>
    </source>
</reference>
<protein>
    <recommendedName>
        <fullName evidence="1">Fe/S biogenesis protein NfuA</fullName>
    </recommendedName>
</protein>
<comment type="function">
    <text evidence="1">Involved in iron-sulfur cluster biogenesis. Binds a 4Fe-4S cluster, can transfer this cluster to apoproteins, and thereby intervenes in the maturation of Fe/S proteins. Could also act as a scaffold/chaperone for damaged Fe/S proteins.</text>
</comment>
<comment type="cofactor">
    <cofactor evidence="1">
        <name>[4Fe-4S] cluster</name>
        <dbReference type="ChEBI" id="CHEBI:49883"/>
    </cofactor>
    <text evidence="1">Binds 1 [4Fe-4S] cluster per subunit. The cluster is presumably bound at the interface of two monomers.</text>
</comment>
<comment type="subunit">
    <text evidence="1">Homodimer.</text>
</comment>
<comment type="similarity">
    <text evidence="1">Belongs to the NfuA family.</text>
</comment>
<accession>Q0TC53</accession>
<evidence type="ECO:0000255" key="1">
    <source>
        <dbReference type="HAMAP-Rule" id="MF_01637"/>
    </source>
</evidence>
<sequence length="191" mass="20998">MIRISDAAQAHFAKLLANQEEGTQIRVFVINPGTPNAECGVSYCPPDAVEATDTALKFDLLTAYVDELSAPYLEDAEIDFVTDQLGSQLTLKAPNAKMRKVADDAPLMERVEYMLQSQINPQLAGHGGRVSLMEITEDGYAILQFGGGCNGCSMVDVTLKEGIEKQLLNEFPELKGVRDLTEHQRGEHSYY</sequence>
<feature type="chain" id="PRO_0000268230" description="Fe/S biogenesis protein NfuA">
    <location>
        <begin position="1"/>
        <end position="191"/>
    </location>
</feature>
<feature type="binding site" evidence="1">
    <location>
        <position position="149"/>
    </location>
    <ligand>
        <name>[4Fe-4S] cluster</name>
        <dbReference type="ChEBI" id="CHEBI:49883"/>
    </ligand>
</feature>
<feature type="binding site" evidence="1">
    <location>
        <position position="152"/>
    </location>
    <ligand>
        <name>[4Fe-4S] cluster</name>
        <dbReference type="ChEBI" id="CHEBI:49883"/>
    </ligand>
</feature>
<dbReference type="EMBL" id="CP000247">
    <property type="protein sequence ID" value="ABG71476.1"/>
    <property type="molecule type" value="Genomic_DNA"/>
</dbReference>
<dbReference type="RefSeq" id="WP_000619389.1">
    <property type="nucleotide sequence ID" value="NC_008253.1"/>
</dbReference>
<dbReference type="SMR" id="Q0TC53"/>
<dbReference type="GeneID" id="93778582"/>
<dbReference type="KEGG" id="ecp:ECP_3500"/>
<dbReference type="HOGENOM" id="CLU_094569_0_0_6"/>
<dbReference type="Proteomes" id="UP000009182">
    <property type="component" value="Chromosome"/>
</dbReference>
<dbReference type="GO" id="GO:0051539">
    <property type="term" value="F:4 iron, 4 sulfur cluster binding"/>
    <property type="evidence" value="ECO:0007669"/>
    <property type="project" value="UniProtKB-UniRule"/>
</dbReference>
<dbReference type="GO" id="GO:0005506">
    <property type="term" value="F:iron ion binding"/>
    <property type="evidence" value="ECO:0007669"/>
    <property type="project" value="InterPro"/>
</dbReference>
<dbReference type="GO" id="GO:0016226">
    <property type="term" value="P:iron-sulfur cluster assembly"/>
    <property type="evidence" value="ECO:0007669"/>
    <property type="project" value="UniProtKB-UniRule"/>
</dbReference>
<dbReference type="GO" id="GO:0051604">
    <property type="term" value="P:protein maturation"/>
    <property type="evidence" value="ECO:0007669"/>
    <property type="project" value="UniProtKB-UniRule"/>
</dbReference>
<dbReference type="FunFam" id="2.60.300.12:FF:000004">
    <property type="entry name" value="Fe/S biogenesis protein NfuA"/>
    <property type="match status" value="1"/>
</dbReference>
<dbReference type="FunFam" id="3.30.300.130:FF:000002">
    <property type="entry name" value="Fe/S biogenesis protein NfuA"/>
    <property type="match status" value="1"/>
</dbReference>
<dbReference type="Gene3D" id="3.30.300.130">
    <property type="entry name" value="Fe-S cluster assembly (FSCA)"/>
    <property type="match status" value="1"/>
</dbReference>
<dbReference type="Gene3D" id="2.60.300.12">
    <property type="entry name" value="HesB-like domain"/>
    <property type="match status" value="1"/>
</dbReference>
<dbReference type="HAMAP" id="MF_01637">
    <property type="entry name" value="Fe_S_biogen_NfuA"/>
    <property type="match status" value="1"/>
</dbReference>
<dbReference type="InterPro" id="IPR017726">
    <property type="entry name" value="Fe/S_biogenesis_protein_NfuA"/>
</dbReference>
<dbReference type="InterPro" id="IPR000361">
    <property type="entry name" value="FeS_biogenesis"/>
</dbReference>
<dbReference type="InterPro" id="IPR034904">
    <property type="entry name" value="FSCA_dom_sf"/>
</dbReference>
<dbReference type="InterPro" id="IPR035903">
    <property type="entry name" value="HesB-like_dom_sf"/>
</dbReference>
<dbReference type="InterPro" id="IPR001075">
    <property type="entry name" value="NIF_FeS_clus_asmbl_NifU_C"/>
</dbReference>
<dbReference type="NCBIfam" id="NF008392">
    <property type="entry name" value="PRK11190.1"/>
    <property type="match status" value="1"/>
</dbReference>
<dbReference type="NCBIfam" id="TIGR03341">
    <property type="entry name" value="YhgI_GntY"/>
    <property type="match status" value="1"/>
</dbReference>
<dbReference type="PANTHER" id="PTHR11178:SF51">
    <property type="entry name" value="FE_S BIOGENESIS PROTEIN NFUA"/>
    <property type="match status" value="1"/>
</dbReference>
<dbReference type="PANTHER" id="PTHR11178">
    <property type="entry name" value="IRON-SULFUR CLUSTER SCAFFOLD PROTEIN NFU-RELATED"/>
    <property type="match status" value="1"/>
</dbReference>
<dbReference type="Pfam" id="PF01521">
    <property type="entry name" value="Fe-S_biosyn"/>
    <property type="match status" value="1"/>
</dbReference>
<dbReference type="Pfam" id="PF01106">
    <property type="entry name" value="NifU"/>
    <property type="match status" value="1"/>
</dbReference>
<dbReference type="SUPFAM" id="SSF117916">
    <property type="entry name" value="Fe-S cluster assembly (FSCA) domain-like"/>
    <property type="match status" value="1"/>
</dbReference>
<dbReference type="SUPFAM" id="SSF89360">
    <property type="entry name" value="HesB-like domain"/>
    <property type="match status" value="1"/>
</dbReference>
<keyword id="KW-0004">4Fe-4S</keyword>
<keyword id="KW-0408">Iron</keyword>
<keyword id="KW-0411">Iron-sulfur</keyword>
<keyword id="KW-0479">Metal-binding</keyword>
<name>NFUA_ECOL5</name>
<gene>
    <name evidence="1" type="primary">nfuA</name>
    <name type="ordered locus">ECP_3500</name>
</gene>